<reference key="1">
    <citation type="submission" date="2005-09" db="EMBL/GenBank/DDBJ databases">
        <authorList>
            <consortium name="NIH - Mammalian Gene Collection (MGC) project"/>
        </authorList>
    </citation>
    <scope>NUCLEOTIDE SEQUENCE [LARGE SCALE MRNA]</scope>
    <source>
        <strain>Hereford</strain>
        <tissue>Ascending colon</tissue>
    </source>
</reference>
<dbReference type="EMBL" id="BC105566">
    <property type="protein sequence ID" value="AAI05567.1"/>
    <property type="molecule type" value="mRNA"/>
</dbReference>
<dbReference type="RefSeq" id="NP_001039772.1">
    <property type="nucleotide sequence ID" value="NM_001046307.1"/>
</dbReference>
<dbReference type="SMR" id="Q2KJ18"/>
<dbReference type="FunCoup" id="Q2KJ18">
    <property type="interactions" value="5"/>
</dbReference>
<dbReference type="STRING" id="9913.ENSBTAP00000027736"/>
<dbReference type="PaxDb" id="9913-ENSBTAP00000027736"/>
<dbReference type="GeneID" id="529849"/>
<dbReference type="KEGG" id="bta:529849"/>
<dbReference type="CTD" id="388125"/>
<dbReference type="eggNOG" id="ENOG502S04T">
    <property type="taxonomic scope" value="Eukaryota"/>
</dbReference>
<dbReference type="HOGENOM" id="CLU_051964_0_0_1"/>
<dbReference type="InParanoid" id="Q2KJ18"/>
<dbReference type="OrthoDB" id="9947256at2759"/>
<dbReference type="TreeFam" id="TF330989"/>
<dbReference type="Proteomes" id="UP000009136">
    <property type="component" value="Unplaced"/>
</dbReference>
<dbReference type="GO" id="GO:0005634">
    <property type="term" value="C:nucleus"/>
    <property type="evidence" value="ECO:0007669"/>
    <property type="project" value="UniProtKB-SubCell"/>
</dbReference>
<dbReference type="InterPro" id="IPR039208">
    <property type="entry name" value="C2_Ca-dependent_4"/>
</dbReference>
<dbReference type="InterPro" id="IPR000008">
    <property type="entry name" value="C2_dom"/>
</dbReference>
<dbReference type="PANTHER" id="PTHR47226">
    <property type="entry name" value="C2 CALCIUM-DEPENDENT DOMAIN-CONTAINING PROTEIN 4A"/>
    <property type="match status" value="1"/>
</dbReference>
<dbReference type="PANTHER" id="PTHR47226:SF3">
    <property type="entry name" value="C2 CALCIUM-DEPENDENT DOMAIN-CONTAINING PROTEIN 4A"/>
    <property type="match status" value="1"/>
</dbReference>
<dbReference type="PROSITE" id="PS50004">
    <property type="entry name" value="C2"/>
    <property type="match status" value="1"/>
</dbReference>
<proteinExistence type="evidence at transcript level"/>
<name>C2C4A_BOVIN</name>
<accession>Q2KJ18</accession>
<evidence type="ECO:0000250" key="1"/>
<evidence type="ECO:0000255" key="2">
    <source>
        <dbReference type="PROSITE-ProRule" id="PRU00041"/>
    </source>
</evidence>
<evidence type="ECO:0000256" key="3">
    <source>
        <dbReference type="SAM" id="MobiDB-lite"/>
    </source>
</evidence>
<evidence type="ECO:0000305" key="4"/>
<organism>
    <name type="scientific">Bos taurus</name>
    <name type="common">Bovine</name>
    <dbReference type="NCBI Taxonomy" id="9913"/>
    <lineage>
        <taxon>Eukaryota</taxon>
        <taxon>Metazoa</taxon>
        <taxon>Chordata</taxon>
        <taxon>Craniata</taxon>
        <taxon>Vertebrata</taxon>
        <taxon>Euteleostomi</taxon>
        <taxon>Mammalia</taxon>
        <taxon>Eutheria</taxon>
        <taxon>Laurasiatheria</taxon>
        <taxon>Artiodactyla</taxon>
        <taxon>Ruminantia</taxon>
        <taxon>Pecora</taxon>
        <taxon>Bovidae</taxon>
        <taxon>Bovinae</taxon>
        <taxon>Bos</taxon>
    </lineage>
</organism>
<comment type="function">
    <text evidence="1">May be involved in inflammatory process. May regulate cell architecture and adhesion (By similarity).</text>
</comment>
<comment type="subcellular location">
    <subcellularLocation>
        <location evidence="1">Nucleus</location>
    </subcellularLocation>
</comment>
<comment type="similarity">
    <text evidence="4">Belongs to the C2CD4 family.</text>
</comment>
<feature type="chain" id="PRO_0000324304" description="C2 calcium-dependent domain-containing protein 4A">
    <location>
        <begin position="1"/>
        <end position="364"/>
    </location>
</feature>
<feature type="domain" description="C2" evidence="2">
    <location>
        <begin position="254"/>
        <end position="364"/>
    </location>
</feature>
<feature type="region of interest" description="Disordered" evidence="3">
    <location>
        <begin position="118"/>
        <end position="175"/>
    </location>
</feature>
<feature type="region of interest" description="Disordered" evidence="3">
    <location>
        <begin position="192"/>
        <end position="242"/>
    </location>
</feature>
<feature type="compositionally biased region" description="Polar residues" evidence="3">
    <location>
        <begin position="220"/>
        <end position="233"/>
    </location>
</feature>
<sequence>MRLLGKLRASAASSAPLEPAFSNVLTPNRIPEFFIPPRLPTPYAPESSPPAAALPRRCAAEPDLWLRGADDGAGRTDWDPRSQAALSLPHLPRALTAYGFCALLESPHTRRKESLFLGSPSSAALPPAPRPRAHTYGGGGGDAPLAPGARSPIATPAARGGPSPSLDTLAPPPRCRRLLRAPEGLLRRALRAGRSRGLARARSVSSGDGEDDDEDESRASPGSPTQAPVTSLSPHRDPRPERLEAEGTVTLGRAGGALRLAAEYNRASGRLRVRLLRAEGPAGGAAEPRAPVGCRISFVLKPRGAVVRRSRRAVLEQDLCLDGLSEDEVRRLAVRVKAENRGRGLERGRLLGQGELLLGPLLLL</sequence>
<gene>
    <name type="primary">C2CD4A</name>
    <name type="synonym">FAM148A</name>
    <name type="synonym">NLF1</name>
</gene>
<keyword id="KW-0539">Nucleus</keyword>
<keyword id="KW-1185">Reference proteome</keyword>
<protein>
    <recommendedName>
        <fullName>C2 calcium-dependent domain-containing protein 4A</fullName>
    </recommendedName>
    <alternativeName>
        <fullName>Nuclear-localized factor 1</fullName>
    </alternativeName>
    <alternativeName>
        <fullName>Protein FAM148A</fullName>
    </alternativeName>
</protein>